<comment type="function">
    <text evidence="1">NAD-binding protein involved in the addition of a carboxymethylaminomethyl (cmnm) group at the wobble position (U34) of certain tRNAs, forming tRNA-cmnm(5)s(2)U34.</text>
</comment>
<comment type="cofactor">
    <cofactor evidence="1">
        <name>FAD</name>
        <dbReference type="ChEBI" id="CHEBI:57692"/>
    </cofactor>
</comment>
<comment type="subunit">
    <text evidence="1">Homodimer. Heterotetramer of two MnmE and two MnmG subunits.</text>
</comment>
<comment type="subcellular location">
    <subcellularLocation>
        <location evidence="1">Cytoplasm</location>
    </subcellularLocation>
</comment>
<comment type="similarity">
    <text evidence="1">Belongs to the MnmG family.</text>
</comment>
<feature type="chain" id="PRO_0000345282" description="tRNA uridine 5-carboxymethylaminomethyl modification enzyme MnmG">
    <location>
        <begin position="1"/>
        <end position="624"/>
    </location>
</feature>
<feature type="binding site" evidence="1">
    <location>
        <begin position="15"/>
        <end position="20"/>
    </location>
    <ligand>
        <name>FAD</name>
        <dbReference type="ChEBI" id="CHEBI:57692"/>
    </ligand>
</feature>
<feature type="binding site" evidence="1">
    <location>
        <begin position="274"/>
        <end position="288"/>
    </location>
    <ligand>
        <name>NAD(+)</name>
        <dbReference type="ChEBI" id="CHEBI:57540"/>
    </ligand>
</feature>
<organism>
    <name type="scientific">Jannaschia sp. (strain CCS1)</name>
    <dbReference type="NCBI Taxonomy" id="290400"/>
    <lineage>
        <taxon>Bacteria</taxon>
        <taxon>Pseudomonadati</taxon>
        <taxon>Pseudomonadota</taxon>
        <taxon>Alphaproteobacteria</taxon>
        <taxon>Rhodobacterales</taxon>
        <taxon>Roseobacteraceae</taxon>
        <taxon>Jannaschia</taxon>
    </lineage>
</organism>
<proteinExistence type="inferred from homology"/>
<name>MNMG_JANSC</name>
<reference key="1">
    <citation type="submission" date="2006-02" db="EMBL/GenBank/DDBJ databases">
        <title>Complete sequence of chromosome of Jannaschia sp. CCS1.</title>
        <authorList>
            <consortium name="US DOE Joint Genome Institute"/>
            <person name="Copeland A."/>
            <person name="Lucas S."/>
            <person name="Lapidus A."/>
            <person name="Barry K."/>
            <person name="Detter J.C."/>
            <person name="Glavina del Rio T."/>
            <person name="Hammon N."/>
            <person name="Israni S."/>
            <person name="Pitluck S."/>
            <person name="Brettin T."/>
            <person name="Bruce D."/>
            <person name="Han C."/>
            <person name="Tapia R."/>
            <person name="Gilna P."/>
            <person name="Chertkov O."/>
            <person name="Saunders E."/>
            <person name="Schmutz J."/>
            <person name="Larimer F."/>
            <person name="Land M."/>
            <person name="Kyrpides N."/>
            <person name="Lykidis A."/>
            <person name="Moran M.A."/>
            <person name="Belas R."/>
            <person name="Ye W."/>
            <person name="Buchan A."/>
            <person name="Gonzalez J.M."/>
            <person name="Schell M.A."/>
            <person name="Richardson P."/>
        </authorList>
    </citation>
    <scope>NUCLEOTIDE SEQUENCE [LARGE SCALE GENOMIC DNA]</scope>
    <source>
        <strain>CCS1</strain>
    </source>
</reference>
<evidence type="ECO:0000255" key="1">
    <source>
        <dbReference type="HAMAP-Rule" id="MF_00129"/>
    </source>
</evidence>
<gene>
    <name evidence="1" type="primary">mnmG</name>
    <name evidence="1" type="synonym">gidA</name>
    <name type="ordered locus">Jann_0200</name>
</gene>
<sequence length="624" mass="67745">MFHVKHRHFDVIVVGGGHAGVEAADAACRAGARTALVTLRKDDLGVMSCNPAIGGLGKGHLVREIDAMGGVMGCAADASGIQYRLLNRKKGAAVQGPRTQSDRALYKSAIQDHMRNVTELTVIEGEVADVIVESETVCGVSFTDGQSISARSVVLTTGTFLRGVIHIGHETRSGGRFGANRAIKLAERLSAMNLPVGRLKTGTPPRLAAKSINWEALDHQPSDDDPTFFSFLTKRVRARQIACGITHTNPHTHDIIEQNLGRSAMYGGNIDSVGPRYCPSIEDKVVRFADKVSHQIFLEPEGLTSETVYPNGISTSLPIDVQLDYVHSIKGLEHADILQPGYAIEYDYIDPTCLNNRLELQDHPGLFLAGQINGTTGYEEAAAQGLVAGLNAAFHAQDRDPLTFSRRESYIGVLVDDLVTRGVSEPYRMFTSRAEYRLSLRADNADQRLTPIAADLDLLTEERTSEFTAKMERLSRGYDILNDLVVTSKQAAAAGMSVNADGKKRTGAELLAFPSVELSDIAQLEPAVGQIDPATAKQLKIEAIYAVYIERQNQDAFALKRDEAKSIPADFPYSSVVGLSNELRMKLIKTRPSTLAQASRIDGMTPAALALILTKIRQTQRLSA</sequence>
<keyword id="KW-0963">Cytoplasm</keyword>
<keyword id="KW-0274">FAD</keyword>
<keyword id="KW-0285">Flavoprotein</keyword>
<keyword id="KW-0520">NAD</keyword>
<keyword id="KW-1185">Reference proteome</keyword>
<keyword id="KW-0819">tRNA processing</keyword>
<dbReference type="EMBL" id="CP000264">
    <property type="protein sequence ID" value="ABD53117.1"/>
    <property type="molecule type" value="Genomic_DNA"/>
</dbReference>
<dbReference type="RefSeq" id="WP_011453326.1">
    <property type="nucleotide sequence ID" value="NC_007802.1"/>
</dbReference>
<dbReference type="SMR" id="Q28VZ5"/>
<dbReference type="STRING" id="290400.Jann_0200"/>
<dbReference type="KEGG" id="jan:Jann_0200"/>
<dbReference type="eggNOG" id="COG0445">
    <property type="taxonomic scope" value="Bacteria"/>
</dbReference>
<dbReference type="HOGENOM" id="CLU_007831_2_2_5"/>
<dbReference type="OrthoDB" id="9815560at2"/>
<dbReference type="Proteomes" id="UP000008326">
    <property type="component" value="Chromosome"/>
</dbReference>
<dbReference type="GO" id="GO:0005829">
    <property type="term" value="C:cytosol"/>
    <property type="evidence" value="ECO:0007669"/>
    <property type="project" value="TreeGrafter"/>
</dbReference>
<dbReference type="GO" id="GO:0050660">
    <property type="term" value="F:flavin adenine dinucleotide binding"/>
    <property type="evidence" value="ECO:0007669"/>
    <property type="project" value="UniProtKB-UniRule"/>
</dbReference>
<dbReference type="GO" id="GO:0030488">
    <property type="term" value="P:tRNA methylation"/>
    <property type="evidence" value="ECO:0007669"/>
    <property type="project" value="TreeGrafter"/>
</dbReference>
<dbReference type="GO" id="GO:0002098">
    <property type="term" value="P:tRNA wobble uridine modification"/>
    <property type="evidence" value="ECO:0007669"/>
    <property type="project" value="InterPro"/>
</dbReference>
<dbReference type="FunFam" id="1.10.150.570:FF:000001">
    <property type="entry name" value="tRNA uridine 5-carboxymethylaminomethyl modification enzyme MnmG"/>
    <property type="match status" value="1"/>
</dbReference>
<dbReference type="FunFam" id="3.50.50.60:FF:000002">
    <property type="entry name" value="tRNA uridine 5-carboxymethylaminomethyl modification enzyme MnmG"/>
    <property type="match status" value="1"/>
</dbReference>
<dbReference type="Gene3D" id="3.50.50.60">
    <property type="entry name" value="FAD/NAD(P)-binding domain"/>
    <property type="match status" value="2"/>
</dbReference>
<dbReference type="Gene3D" id="1.10.150.570">
    <property type="entry name" value="GidA associated domain, C-terminal subdomain"/>
    <property type="match status" value="1"/>
</dbReference>
<dbReference type="Gene3D" id="1.10.10.1800">
    <property type="entry name" value="tRNA uridine 5-carboxymethylaminomethyl modification enzyme MnmG/GidA"/>
    <property type="match status" value="1"/>
</dbReference>
<dbReference type="HAMAP" id="MF_00129">
    <property type="entry name" value="MnmG_GidA"/>
    <property type="match status" value="1"/>
</dbReference>
<dbReference type="InterPro" id="IPR036188">
    <property type="entry name" value="FAD/NAD-bd_sf"/>
</dbReference>
<dbReference type="InterPro" id="IPR049312">
    <property type="entry name" value="GIDA_C_N"/>
</dbReference>
<dbReference type="InterPro" id="IPR004416">
    <property type="entry name" value="MnmG"/>
</dbReference>
<dbReference type="InterPro" id="IPR002218">
    <property type="entry name" value="MnmG-rel"/>
</dbReference>
<dbReference type="InterPro" id="IPR020595">
    <property type="entry name" value="MnmG-rel_CS"/>
</dbReference>
<dbReference type="InterPro" id="IPR026904">
    <property type="entry name" value="MnmG_C"/>
</dbReference>
<dbReference type="InterPro" id="IPR047001">
    <property type="entry name" value="MnmG_C_subdom"/>
</dbReference>
<dbReference type="InterPro" id="IPR044920">
    <property type="entry name" value="MnmG_C_subdom_sf"/>
</dbReference>
<dbReference type="InterPro" id="IPR040131">
    <property type="entry name" value="MnmG_N"/>
</dbReference>
<dbReference type="NCBIfam" id="TIGR00136">
    <property type="entry name" value="mnmG_gidA"/>
    <property type="match status" value="1"/>
</dbReference>
<dbReference type="PANTHER" id="PTHR11806">
    <property type="entry name" value="GLUCOSE INHIBITED DIVISION PROTEIN A"/>
    <property type="match status" value="1"/>
</dbReference>
<dbReference type="PANTHER" id="PTHR11806:SF0">
    <property type="entry name" value="PROTEIN MTO1 HOMOLOG, MITOCHONDRIAL"/>
    <property type="match status" value="1"/>
</dbReference>
<dbReference type="Pfam" id="PF01134">
    <property type="entry name" value="GIDA"/>
    <property type="match status" value="1"/>
</dbReference>
<dbReference type="Pfam" id="PF21680">
    <property type="entry name" value="GIDA_C_1st"/>
    <property type="match status" value="1"/>
</dbReference>
<dbReference type="Pfam" id="PF13932">
    <property type="entry name" value="SAM_GIDA_C"/>
    <property type="match status" value="1"/>
</dbReference>
<dbReference type="SMART" id="SM01228">
    <property type="entry name" value="GIDA_assoc_3"/>
    <property type="match status" value="1"/>
</dbReference>
<dbReference type="SUPFAM" id="SSF51905">
    <property type="entry name" value="FAD/NAD(P)-binding domain"/>
    <property type="match status" value="1"/>
</dbReference>
<dbReference type="PROSITE" id="PS01280">
    <property type="entry name" value="GIDA_1"/>
    <property type="match status" value="1"/>
</dbReference>
<dbReference type="PROSITE" id="PS01281">
    <property type="entry name" value="GIDA_2"/>
    <property type="match status" value="1"/>
</dbReference>
<protein>
    <recommendedName>
        <fullName evidence="1">tRNA uridine 5-carboxymethylaminomethyl modification enzyme MnmG</fullName>
    </recommendedName>
    <alternativeName>
        <fullName evidence="1">Glucose-inhibited division protein A</fullName>
    </alternativeName>
</protein>
<accession>Q28VZ5</accession>